<gene>
    <name evidence="4" type="primary">DES1</name>
    <name type="ordered locus">CAALFM_C505480WA</name>
    <name type="ORF">CaO19.11530</name>
    <name type="ORF">CaO19.4048</name>
</gene>
<feature type="chain" id="PRO_0000434803" description="Sphingolipid delta(4)-desaturase">
    <location>
        <begin position="1"/>
        <end position="370"/>
    </location>
</feature>
<feature type="transmembrane region" description="Helical" evidence="2">
    <location>
        <begin position="68"/>
        <end position="88"/>
    </location>
</feature>
<feature type="transmembrane region" description="Helical" evidence="2">
    <location>
        <begin position="92"/>
        <end position="112"/>
    </location>
</feature>
<feature type="transmembrane region" description="Helical" evidence="2">
    <location>
        <begin position="128"/>
        <end position="148"/>
    </location>
</feature>
<feature type="transmembrane region" description="Helical" evidence="2">
    <location>
        <begin position="173"/>
        <end position="193"/>
    </location>
</feature>
<feature type="transmembrane region" description="Helical" evidence="2">
    <location>
        <begin position="197"/>
        <end position="217"/>
    </location>
</feature>
<feature type="transmembrane region" description="Helical" evidence="2">
    <location>
        <begin position="220"/>
        <end position="240"/>
    </location>
</feature>
<feature type="short sequence motif" description="Histidine box-1" evidence="5">
    <location>
        <begin position="112"/>
        <end position="116"/>
    </location>
</feature>
<feature type="short sequence motif" description="Histidine box-2" evidence="5">
    <location>
        <begin position="149"/>
        <end position="153"/>
    </location>
</feature>
<feature type="short sequence motif" description="Histidine box-3" evidence="5">
    <location>
        <begin position="299"/>
        <end position="303"/>
    </location>
</feature>
<accession>Q5AJX2</accession>
<accession>A0A1D8PP83</accession>
<sequence>MDAEIKHRNSDKTFKFVTPPADSSIEVLNDFYWTDTDEPHVARRKMILQKYPEVTKLTGHEPKTKWYVMGVVLLQLGIAYYLRHTPVFSWKFLTLAYVIGATANQAIFLAIHELSHNLLFRKPLHNKLFAVFANIPIGVPYSASFQPYHQLHHKFLGDMYLDTDLPTEYEGRFLSSMPGKLFFAIFQIFFYALRPMFITQIKFTYVHLVNVVFQLIFDHVMVTCWGWKALGYFIVSTFLAGSLHPCAGHFIAEHYVLNENNVPRHQKIGGTNISKELLPAETYSYYGTLNMLTWNVGYHNEHHDFPYIAWTRLPELRRIAAEFYDPLPQVTSWCGVIWWFIFNDVNTVWNRVKREGKEKHGYRINRLDEN</sequence>
<name>DEGS_CANAL</name>
<reference key="1">
    <citation type="journal article" date="2004" name="Proc. Natl. Acad. Sci. U.S.A.">
        <title>The diploid genome sequence of Candida albicans.</title>
        <authorList>
            <person name="Jones T."/>
            <person name="Federspiel N.A."/>
            <person name="Chibana H."/>
            <person name="Dungan J."/>
            <person name="Kalman S."/>
            <person name="Magee B.B."/>
            <person name="Newport G."/>
            <person name="Thorstenson Y.R."/>
            <person name="Agabian N."/>
            <person name="Magee P.T."/>
            <person name="Davis R.W."/>
            <person name="Scherer S."/>
        </authorList>
    </citation>
    <scope>NUCLEOTIDE SEQUENCE [LARGE SCALE GENOMIC DNA]</scope>
    <source>
        <strain>SC5314 / ATCC MYA-2876</strain>
    </source>
</reference>
<reference key="2">
    <citation type="journal article" date="2007" name="Genome Biol.">
        <title>Assembly of the Candida albicans genome into sixteen supercontigs aligned on the eight chromosomes.</title>
        <authorList>
            <person name="van het Hoog M."/>
            <person name="Rast T.J."/>
            <person name="Martchenko M."/>
            <person name="Grindle S."/>
            <person name="Dignard D."/>
            <person name="Hogues H."/>
            <person name="Cuomo C."/>
            <person name="Berriman M."/>
            <person name="Scherer S."/>
            <person name="Magee B.B."/>
            <person name="Whiteway M."/>
            <person name="Chibana H."/>
            <person name="Nantel A."/>
            <person name="Magee P.T."/>
        </authorList>
    </citation>
    <scope>GENOME REANNOTATION</scope>
    <source>
        <strain>SC5314 / ATCC MYA-2876</strain>
    </source>
</reference>
<reference key="3">
    <citation type="journal article" date="2013" name="Genome Biol.">
        <title>Assembly of a phased diploid Candida albicans genome facilitates allele-specific measurements and provides a simple model for repeat and indel structure.</title>
        <authorList>
            <person name="Muzzey D."/>
            <person name="Schwartz K."/>
            <person name="Weissman J.S."/>
            <person name="Sherlock G."/>
        </authorList>
    </citation>
    <scope>NUCLEOTIDE SEQUENCE [LARGE SCALE GENOMIC DNA]</scope>
    <scope>GENOME REANNOTATION</scope>
    <source>
        <strain>SC5314 / ATCC MYA-2876</strain>
    </source>
</reference>
<reference key="4">
    <citation type="journal article" date="2002" name="J. Biol. Chem.">
        <title>Identification and characterization of a sphingolipid delta 4-desaturase family.</title>
        <authorList>
            <person name="Ternes P."/>
            <person name="Franke S."/>
            <person name="Zaehringer U."/>
            <person name="Sperling P."/>
            <person name="Heinz E."/>
        </authorList>
    </citation>
    <scope>FUNCTION</scope>
    <scope>CATALYTIC ACTIVITY</scope>
    <scope>PATHWAY</scope>
    <source>
        <strain>SC5314 / ATCC MYA-2876</strain>
    </source>
</reference>
<proteinExistence type="evidence at protein level"/>
<keyword id="KW-0443">Lipid metabolism</keyword>
<keyword id="KW-0472">Membrane</keyword>
<keyword id="KW-0560">Oxidoreductase</keyword>
<keyword id="KW-1185">Reference proteome</keyword>
<keyword id="KW-0746">Sphingolipid metabolism</keyword>
<keyword id="KW-0812">Transmembrane</keyword>
<keyword id="KW-1133">Transmembrane helix</keyword>
<comment type="function">
    <text evidence="3">Delta(4)-fatty-acid desaturase which introduces a double bond at the 4-position in the long-chain base (LCB) of ceramides. Required for the formation of the monounsaturated sphingoid base (E)-sphing-4-enine during glucosylceramide (GluCer) biosynthesis.</text>
</comment>
<comment type="catalytic activity">
    <reaction evidence="3">
        <text>an N-acylsphinganine + 2 Fe(II)-[cytochrome b5] + O2 + 2 H(+) = an N-acylsphing-4-enine + 2 Fe(III)-[cytochrome b5] + 2 H2O</text>
        <dbReference type="Rhea" id="RHEA:46544"/>
        <dbReference type="Rhea" id="RHEA-COMP:10438"/>
        <dbReference type="Rhea" id="RHEA-COMP:10439"/>
        <dbReference type="ChEBI" id="CHEBI:15377"/>
        <dbReference type="ChEBI" id="CHEBI:15378"/>
        <dbReference type="ChEBI" id="CHEBI:15379"/>
        <dbReference type="ChEBI" id="CHEBI:29033"/>
        <dbReference type="ChEBI" id="CHEBI:29034"/>
        <dbReference type="ChEBI" id="CHEBI:31488"/>
        <dbReference type="ChEBI" id="CHEBI:52639"/>
        <dbReference type="EC" id="1.14.19.17"/>
    </reaction>
</comment>
<comment type="pathway">
    <text evidence="6">Lipid metabolism; sphingolipid metabolism.</text>
</comment>
<comment type="subcellular location">
    <subcellularLocation>
        <location evidence="2">Membrane</location>
        <topology evidence="2">Multi-pass membrane protein</topology>
    </subcellularLocation>
</comment>
<comment type="similarity">
    <text evidence="5">Belongs to the fatty acid desaturase type 1 family. DEGS subfamily.</text>
</comment>
<dbReference type="EC" id="1.14.19.17" evidence="3"/>
<dbReference type="EMBL" id="CP017627">
    <property type="protein sequence ID" value="AOW29951.1"/>
    <property type="molecule type" value="Genomic_DNA"/>
</dbReference>
<dbReference type="RefSeq" id="XP_721956.1">
    <property type="nucleotide sequence ID" value="XM_716863.2"/>
</dbReference>
<dbReference type="STRING" id="237561.Q5AJX2"/>
<dbReference type="EnsemblFungi" id="C5_05480W_A-T">
    <property type="protein sequence ID" value="C5_05480W_A-T-p1"/>
    <property type="gene ID" value="C5_05480W_A"/>
</dbReference>
<dbReference type="GeneID" id="3636529"/>
<dbReference type="KEGG" id="cal:CAALFM_C505480WA"/>
<dbReference type="CGD" id="CAL0000198792">
    <property type="gene designation" value="DES1"/>
</dbReference>
<dbReference type="VEuPathDB" id="FungiDB:C5_05480W_A"/>
<dbReference type="eggNOG" id="KOG2987">
    <property type="taxonomic scope" value="Eukaryota"/>
</dbReference>
<dbReference type="HOGENOM" id="CLU_032156_0_1_1"/>
<dbReference type="InParanoid" id="Q5AJX2"/>
<dbReference type="OMA" id="GATCNQN"/>
<dbReference type="OrthoDB" id="200948at2759"/>
<dbReference type="BRENDA" id="1.14.19.17">
    <property type="organism ID" value="1096"/>
</dbReference>
<dbReference type="UniPathway" id="UPA00222"/>
<dbReference type="PRO" id="PR:Q5AJX2"/>
<dbReference type="Proteomes" id="UP000000559">
    <property type="component" value="Chromosome 5"/>
</dbReference>
<dbReference type="GO" id="GO:0016020">
    <property type="term" value="C:membrane"/>
    <property type="evidence" value="ECO:0007669"/>
    <property type="project" value="UniProtKB-SubCell"/>
</dbReference>
<dbReference type="GO" id="GO:0042284">
    <property type="term" value="F:sphingolipid delta-4 desaturase activity"/>
    <property type="evidence" value="ECO:0000247"/>
    <property type="project" value="CGD"/>
</dbReference>
<dbReference type="GO" id="GO:0046513">
    <property type="term" value="P:ceramide biosynthetic process"/>
    <property type="evidence" value="ECO:0000318"/>
    <property type="project" value="GO_Central"/>
</dbReference>
<dbReference type="GO" id="GO:0006665">
    <property type="term" value="P:sphingolipid metabolic process"/>
    <property type="evidence" value="ECO:0000247"/>
    <property type="project" value="CGD"/>
</dbReference>
<dbReference type="CDD" id="cd03508">
    <property type="entry name" value="Delta4-sphingolipid-FADS-like"/>
    <property type="match status" value="1"/>
</dbReference>
<dbReference type="InterPro" id="IPR011388">
    <property type="entry name" value="DES1/DES2"/>
</dbReference>
<dbReference type="InterPro" id="IPR005804">
    <property type="entry name" value="FA_desaturase_dom"/>
</dbReference>
<dbReference type="InterPro" id="IPR013866">
    <property type="entry name" value="Sphingolipid_d4-desaturase_N"/>
</dbReference>
<dbReference type="PANTHER" id="PTHR12879">
    <property type="entry name" value="SPHINGOLIPID DELTA 4 DESATURASE/C-4 HYDROXYLASE PROTEIN DES2"/>
    <property type="match status" value="1"/>
</dbReference>
<dbReference type="PANTHER" id="PTHR12879:SF8">
    <property type="entry name" value="SPHINGOLIPID DELTA(4)-DESATURASE DES1"/>
    <property type="match status" value="1"/>
</dbReference>
<dbReference type="Pfam" id="PF00487">
    <property type="entry name" value="FA_desaturase"/>
    <property type="match status" value="1"/>
</dbReference>
<dbReference type="Pfam" id="PF08557">
    <property type="entry name" value="Lipid_DES"/>
    <property type="match status" value="1"/>
</dbReference>
<dbReference type="PIRSF" id="PIRSF017228">
    <property type="entry name" value="Sphnglp_dlt4_des"/>
    <property type="match status" value="1"/>
</dbReference>
<dbReference type="SMART" id="SM01269">
    <property type="entry name" value="Lipid_DES"/>
    <property type="match status" value="1"/>
</dbReference>
<evidence type="ECO:0000250" key="1">
    <source>
        <dbReference type="UniProtKB" id="C4R613"/>
    </source>
</evidence>
<evidence type="ECO:0000255" key="2"/>
<evidence type="ECO:0000269" key="3">
    <source>
    </source>
</evidence>
<evidence type="ECO:0000303" key="4">
    <source>
    </source>
</evidence>
<evidence type="ECO:0000305" key="5"/>
<evidence type="ECO:0000305" key="6">
    <source>
    </source>
</evidence>
<protein>
    <recommendedName>
        <fullName evidence="4">Sphingolipid delta(4)-desaturase</fullName>
        <ecNumber evidence="3">1.14.19.17</ecNumber>
    </recommendedName>
    <alternativeName>
        <fullName evidence="1">Delta 4-(E)-sphingolipid desaturase</fullName>
    </alternativeName>
    <alternativeName>
        <fullName evidence="4">Dihydroceramide desaturase</fullName>
    </alternativeName>
</protein>
<organism>
    <name type="scientific">Candida albicans (strain SC5314 / ATCC MYA-2876)</name>
    <name type="common">Yeast</name>
    <dbReference type="NCBI Taxonomy" id="237561"/>
    <lineage>
        <taxon>Eukaryota</taxon>
        <taxon>Fungi</taxon>
        <taxon>Dikarya</taxon>
        <taxon>Ascomycota</taxon>
        <taxon>Saccharomycotina</taxon>
        <taxon>Pichiomycetes</taxon>
        <taxon>Debaryomycetaceae</taxon>
        <taxon>Candida/Lodderomyces clade</taxon>
        <taxon>Candida</taxon>
    </lineage>
</organism>